<protein>
    <recommendedName>
        <fullName evidence="1">Aspartate--tRNA ligase</fullName>
        <ecNumber evidence="1">6.1.1.12</ecNumber>
    </recommendedName>
    <alternativeName>
        <fullName evidence="1">Aspartyl-tRNA synthetase</fullName>
        <shortName evidence="1">AspRS</shortName>
    </alternativeName>
</protein>
<dbReference type="EC" id="6.1.1.12" evidence="1"/>
<dbReference type="EMBL" id="AL766856">
    <property type="protein sequence ID" value="CAD47719.1"/>
    <property type="molecule type" value="Genomic_DNA"/>
</dbReference>
<dbReference type="RefSeq" id="WP_000830928.1">
    <property type="nucleotide sequence ID" value="NC_004368.1"/>
</dbReference>
<dbReference type="SMR" id="Q8E2Q7"/>
<dbReference type="GeneID" id="66886842"/>
<dbReference type="KEGG" id="san:aspS"/>
<dbReference type="eggNOG" id="COG0173">
    <property type="taxonomic scope" value="Bacteria"/>
</dbReference>
<dbReference type="HOGENOM" id="CLU_014330_3_2_9"/>
<dbReference type="Proteomes" id="UP000000823">
    <property type="component" value="Chromosome"/>
</dbReference>
<dbReference type="GO" id="GO:0005737">
    <property type="term" value="C:cytoplasm"/>
    <property type="evidence" value="ECO:0007669"/>
    <property type="project" value="UniProtKB-SubCell"/>
</dbReference>
<dbReference type="GO" id="GO:0004815">
    <property type="term" value="F:aspartate-tRNA ligase activity"/>
    <property type="evidence" value="ECO:0007669"/>
    <property type="project" value="UniProtKB-UniRule"/>
</dbReference>
<dbReference type="GO" id="GO:0005524">
    <property type="term" value="F:ATP binding"/>
    <property type="evidence" value="ECO:0007669"/>
    <property type="project" value="UniProtKB-UniRule"/>
</dbReference>
<dbReference type="GO" id="GO:0140096">
    <property type="term" value="F:catalytic activity, acting on a protein"/>
    <property type="evidence" value="ECO:0007669"/>
    <property type="project" value="UniProtKB-ARBA"/>
</dbReference>
<dbReference type="GO" id="GO:0003676">
    <property type="term" value="F:nucleic acid binding"/>
    <property type="evidence" value="ECO:0007669"/>
    <property type="project" value="InterPro"/>
</dbReference>
<dbReference type="GO" id="GO:0016740">
    <property type="term" value="F:transferase activity"/>
    <property type="evidence" value="ECO:0007669"/>
    <property type="project" value="UniProtKB-ARBA"/>
</dbReference>
<dbReference type="GO" id="GO:0006422">
    <property type="term" value="P:aspartyl-tRNA aminoacylation"/>
    <property type="evidence" value="ECO:0007669"/>
    <property type="project" value="UniProtKB-UniRule"/>
</dbReference>
<dbReference type="CDD" id="cd00777">
    <property type="entry name" value="AspRS_core"/>
    <property type="match status" value="1"/>
</dbReference>
<dbReference type="CDD" id="cd04317">
    <property type="entry name" value="EcAspRS_like_N"/>
    <property type="match status" value="1"/>
</dbReference>
<dbReference type="Gene3D" id="3.30.930.10">
    <property type="entry name" value="Bira Bifunctional Protein, Domain 2"/>
    <property type="match status" value="1"/>
</dbReference>
<dbReference type="Gene3D" id="3.30.1360.30">
    <property type="entry name" value="GAD-like domain"/>
    <property type="match status" value="1"/>
</dbReference>
<dbReference type="Gene3D" id="2.40.50.140">
    <property type="entry name" value="Nucleic acid-binding proteins"/>
    <property type="match status" value="1"/>
</dbReference>
<dbReference type="HAMAP" id="MF_00044">
    <property type="entry name" value="Asp_tRNA_synth_type1"/>
    <property type="match status" value="1"/>
</dbReference>
<dbReference type="InterPro" id="IPR004364">
    <property type="entry name" value="Aa-tRNA-synt_II"/>
</dbReference>
<dbReference type="InterPro" id="IPR006195">
    <property type="entry name" value="aa-tRNA-synth_II"/>
</dbReference>
<dbReference type="InterPro" id="IPR045864">
    <property type="entry name" value="aa-tRNA-synth_II/BPL/LPL"/>
</dbReference>
<dbReference type="InterPro" id="IPR004524">
    <property type="entry name" value="Asp-tRNA-ligase_1"/>
</dbReference>
<dbReference type="InterPro" id="IPR047089">
    <property type="entry name" value="Asp-tRNA-ligase_1_N"/>
</dbReference>
<dbReference type="InterPro" id="IPR002312">
    <property type="entry name" value="Asp/Asn-tRNA-synth_IIb"/>
</dbReference>
<dbReference type="InterPro" id="IPR047090">
    <property type="entry name" value="AspRS_core"/>
</dbReference>
<dbReference type="InterPro" id="IPR004115">
    <property type="entry name" value="GAD-like_sf"/>
</dbReference>
<dbReference type="InterPro" id="IPR029351">
    <property type="entry name" value="GAD_dom"/>
</dbReference>
<dbReference type="InterPro" id="IPR012340">
    <property type="entry name" value="NA-bd_OB-fold"/>
</dbReference>
<dbReference type="InterPro" id="IPR004365">
    <property type="entry name" value="NA-bd_OB_tRNA"/>
</dbReference>
<dbReference type="NCBIfam" id="TIGR00459">
    <property type="entry name" value="aspS_bact"/>
    <property type="match status" value="1"/>
</dbReference>
<dbReference type="NCBIfam" id="NF001750">
    <property type="entry name" value="PRK00476.1"/>
    <property type="match status" value="1"/>
</dbReference>
<dbReference type="PANTHER" id="PTHR22594:SF5">
    <property type="entry name" value="ASPARTATE--TRNA LIGASE, MITOCHONDRIAL"/>
    <property type="match status" value="1"/>
</dbReference>
<dbReference type="PANTHER" id="PTHR22594">
    <property type="entry name" value="ASPARTYL/LYSYL-TRNA SYNTHETASE"/>
    <property type="match status" value="1"/>
</dbReference>
<dbReference type="Pfam" id="PF02938">
    <property type="entry name" value="GAD"/>
    <property type="match status" value="1"/>
</dbReference>
<dbReference type="Pfam" id="PF00152">
    <property type="entry name" value="tRNA-synt_2"/>
    <property type="match status" value="1"/>
</dbReference>
<dbReference type="Pfam" id="PF01336">
    <property type="entry name" value="tRNA_anti-codon"/>
    <property type="match status" value="1"/>
</dbReference>
<dbReference type="PRINTS" id="PR01042">
    <property type="entry name" value="TRNASYNTHASP"/>
</dbReference>
<dbReference type="SUPFAM" id="SSF55681">
    <property type="entry name" value="Class II aaRS and biotin synthetases"/>
    <property type="match status" value="1"/>
</dbReference>
<dbReference type="SUPFAM" id="SSF55261">
    <property type="entry name" value="GAD domain-like"/>
    <property type="match status" value="1"/>
</dbReference>
<dbReference type="SUPFAM" id="SSF50249">
    <property type="entry name" value="Nucleic acid-binding proteins"/>
    <property type="match status" value="1"/>
</dbReference>
<dbReference type="PROSITE" id="PS50862">
    <property type="entry name" value="AA_TRNA_LIGASE_II"/>
    <property type="match status" value="1"/>
</dbReference>
<feature type="chain" id="PRO_0000110949" description="Aspartate--tRNA ligase">
    <location>
        <begin position="1"/>
        <end position="583"/>
    </location>
</feature>
<feature type="region of interest" description="Aspartate" evidence="1">
    <location>
        <begin position="198"/>
        <end position="201"/>
    </location>
</feature>
<feature type="binding site" evidence="1">
    <location>
        <position position="174"/>
    </location>
    <ligand>
        <name>L-aspartate</name>
        <dbReference type="ChEBI" id="CHEBI:29991"/>
    </ligand>
</feature>
<feature type="binding site" evidence="1">
    <location>
        <begin position="220"/>
        <end position="222"/>
    </location>
    <ligand>
        <name>ATP</name>
        <dbReference type="ChEBI" id="CHEBI:30616"/>
    </ligand>
</feature>
<feature type="binding site" evidence="1">
    <location>
        <position position="220"/>
    </location>
    <ligand>
        <name>L-aspartate</name>
        <dbReference type="ChEBI" id="CHEBI:29991"/>
    </ligand>
</feature>
<feature type="binding site" evidence="1">
    <location>
        <position position="229"/>
    </location>
    <ligand>
        <name>ATP</name>
        <dbReference type="ChEBI" id="CHEBI:30616"/>
    </ligand>
</feature>
<feature type="binding site" evidence="1">
    <location>
        <position position="443"/>
    </location>
    <ligand>
        <name>L-aspartate</name>
        <dbReference type="ChEBI" id="CHEBI:29991"/>
    </ligand>
</feature>
<feature type="binding site" evidence="1">
    <location>
        <position position="477"/>
    </location>
    <ligand>
        <name>ATP</name>
        <dbReference type="ChEBI" id="CHEBI:30616"/>
    </ligand>
</feature>
<feature type="binding site" evidence="1">
    <location>
        <position position="484"/>
    </location>
    <ligand>
        <name>L-aspartate</name>
        <dbReference type="ChEBI" id="CHEBI:29991"/>
    </ligand>
</feature>
<feature type="binding site" evidence="1">
    <location>
        <begin position="529"/>
        <end position="532"/>
    </location>
    <ligand>
        <name>ATP</name>
        <dbReference type="ChEBI" id="CHEBI:30616"/>
    </ligand>
</feature>
<organism>
    <name type="scientific">Streptococcus agalactiae serotype III (strain NEM316)</name>
    <dbReference type="NCBI Taxonomy" id="211110"/>
    <lineage>
        <taxon>Bacteria</taxon>
        <taxon>Bacillati</taxon>
        <taxon>Bacillota</taxon>
        <taxon>Bacilli</taxon>
        <taxon>Lactobacillales</taxon>
        <taxon>Streptococcaceae</taxon>
        <taxon>Streptococcus</taxon>
    </lineage>
</organism>
<name>SYD_STRA3</name>
<sequence length="583" mass="66082">MKRSMYAGRVRSEHIGTSITLKGWVGRRRDLGGLIFIDLRDREGIMQLVINPEEVAASVMATAESLRSEFVIEVSGVVTAREQANDNLPTGEVELKVQELSVLNTSKTTPFEIKDGIEANDDTRMRYRYLDLRRPEMLENFKLRAKVTHSIRNYLDNLEFIDVETPMLTKSTPEGARDYLVPSRVNQGHFYALPQSPQITKQLLMNAGFDRYYQIVKCFRDEDLRGDRQPEFTQVDLETSFLSDQEIQDIVEGMIAKVMKDTKGLEVSLPFPRMAYDDAMNNYGSDKPDTRFDMLLQDLTEIVKEVDFKVFSEASVVKAIVVKDKADKYSRKNIDKLTEIAKQYGAKGLAWLKYVDNTISGPVAKFLTAIEGRLTEALQLENNDLILFVADSLEVANETLGALRTRIAKELELIDYSKFNFLWVVDWPMFEWSEEEGRYMSAHHPFTLPTAETAHELEGDLAKVRAVAYDIVLNGYELGGGSLRINQKDTQERMFKALGFSAESAQEQFGFLLEAMDYGFPPHGGLAIGLDRFVMLLAGKDNIREVIAFPKNNKASDPMTQAPSLVSEQQLEELSLTVESYEN</sequence>
<reference key="1">
    <citation type="journal article" date="2002" name="Mol. Microbiol.">
        <title>Genome sequence of Streptococcus agalactiae, a pathogen causing invasive neonatal disease.</title>
        <authorList>
            <person name="Glaser P."/>
            <person name="Rusniok C."/>
            <person name="Buchrieser C."/>
            <person name="Chevalier F."/>
            <person name="Frangeul L."/>
            <person name="Msadek T."/>
            <person name="Zouine M."/>
            <person name="Couve E."/>
            <person name="Lalioui L."/>
            <person name="Poyart C."/>
            <person name="Trieu-Cuot P."/>
            <person name="Kunst F."/>
        </authorList>
    </citation>
    <scope>NUCLEOTIDE SEQUENCE [LARGE SCALE GENOMIC DNA]</scope>
    <source>
        <strain>NEM316</strain>
    </source>
</reference>
<keyword id="KW-0030">Aminoacyl-tRNA synthetase</keyword>
<keyword id="KW-0067">ATP-binding</keyword>
<keyword id="KW-0963">Cytoplasm</keyword>
<keyword id="KW-0436">Ligase</keyword>
<keyword id="KW-0547">Nucleotide-binding</keyword>
<keyword id="KW-0648">Protein biosynthesis</keyword>
<gene>
    <name evidence="1" type="primary">aspS</name>
    <name type="ordered locus">gbs2060</name>
</gene>
<accession>Q8E2Q7</accession>
<comment type="function">
    <text evidence="1">Catalyzes the attachment of L-aspartate to tRNA(Asp) in a two-step reaction: L-aspartate is first activated by ATP to form Asp-AMP and then transferred to the acceptor end of tRNA(Asp).</text>
</comment>
<comment type="catalytic activity">
    <reaction evidence="1">
        <text>tRNA(Asp) + L-aspartate + ATP = L-aspartyl-tRNA(Asp) + AMP + diphosphate</text>
        <dbReference type="Rhea" id="RHEA:19649"/>
        <dbReference type="Rhea" id="RHEA-COMP:9660"/>
        <dbReference type="Rhea" id="RHEA-COMP:9678"/>
        <dbReference type="ChEBI" id="CHEBI:29991"/>
        <dbReference type="ChEBI" id="CHEBI:30616"/>
        <dbReference type="ChEBI" id="CHEBI:33019"/>
        <dbReference type="ChEBI" id="CHEBI:78442"/>
        <dbReference type="ChEBI" id="CHEBI:78516"/>
        <dbReference type="ChEBI" id="CHEBI:456215"/>
        <dbReference type="EC" id="6.1.1.12"/>
    </reaction>
</comment>
<comment type="subunit">
    <text evidence="1">Homodimer.</text>
</comment>
<comment type="subcellular location">
    <subcellularLocation>
        <location evidence="1">Cytoplasm</location>
    </subcellularLocation>
</comment>
<comment type="similarity">
    <text evidence="1">Belongs to the class-II aminoacyl-tRNA synthetase family. Type 1 subfamily.</text>
</comment>
<evidence type="ECO:0000255" key="1">
    <source>
        <dbReference type="HAMAP-Rule" id="MF_00044"/>
    </source>
</evidence>
<proteinExistence type="inferred from homology"/>